<comment type="function">
    <text evidence="1">IGPS catalyzes the conversion of PRFAR and glutamine to IGP, AICAR and glutamate. The HisF subunit catalyzes the cyclization activity that produces IGP and AICAR from PRFAR using the ammonia provided by the HisH subunit.</text>
</comment>
<comment type="catalytic activity">
    <reaction evidence="1">
        <text>5-[(5-phospho-1-deoxy-D-ribulos-1-ylimino)methylamino]-1-(5-phospho-beta-D-ribosyl)imidazole-4-carboxamide + L-glutamine = D-erythro-1-(imidazol-4-yl)glycerol 3-phosphate + 5-amino-1-(5-phospho-beta-D-ribosyl)imidazole-4-carboxamide + L-glutamate + H(+)</text>
        <dbReference type="Rhea" id="RHEA:24793"/>
        <dbReference type="ChEBI" id="CHEBI:15378"/>
        <dbReference type="ChEBI" id="CHEBI:29985"/>
        <dbReference type="ChEBI" id="CHEBI:58278"/>
        <dbReference type="ChEBI" id="CHEBI:58359"/>
        <dbReference type="ChEBI" id="CHEBI:58475"/>
        <dbReference type="ChEBI" id="CHEBI:58525"/>
        <dbReference type="EC" id="4.3.2.10"/>
    </reaction>
</comment>
<comment type="pathway">
    <text evidence="1">Amino-acid biosynthesis; L-histidine biosynthesis; L-histidine from 5-phospho-alpha-D-ribose 1-diphosphate: step 5/9.</text>
</comment>
<comment type="subunit">
    <text evidence="1">Heterodimer of HisH and HisF.</text>
</comment>
<comment type="subcellular location">
    <subcellularLocation>
        <location evidence="1">Cytoplasm</location>
    </subcellularLocation>
</comment>
<comment type="similarity">
    <text evidence="1">Belongs to the HisA/HisF family.</text>
</comment>
<protein>
    <recommendedName>
        <fullName evidence="1">Imidazole glycerol phosphate synthase subunit HisF</fullName>
        <ecNumber evidence="1">4.3.2.10</ecNumber>
    </recommendedName>
    <alternativeName>
        <fullName evidence="1">IGP synthase cyclase subunit</fullName>
    </alternativeName>
    <alternativeName>
        <fullName evidence="1">IGP synthase subunit HisF</fullName>
    </alternativeName>
    <alternativeName>
        <fullName evidence="1">ImGP synthase subunit HisF</fullName>
        <shortName evidence="1">IGPS subunit HisF</shortName>
    </alternativeName>
</protein>
<proteinExistence type="inferred from homology"/>
<accession>B2UQA2</accession>
<name>HIS6_AKKM8</name>
<keyword id="KW-0028">Amino-acid biosynthesis</keyword>
<keyword id="KW-0963">Cytoplasm</keyword>
<keyword id="KW-0368">Histidine biosynthesis</keyword>
<keyword id="KW-0456">Lyase</keyword>
<keyword id="KW-1185">Reference proteome</keyword>
<organism>
    <name type="scientific">Akkermansia muciniphila (strain ATCC BAA-835 / DSM 22959 / JCM 33894 / BCRC 81048 / CCUG 64013 / CIP 107961 / Muc)</name>
    <dbReference type="NCBI Taxonomy" id="349741"/>
    <lineage>
        <taxon>Bacteria</taxon>
        <taxon>Pseudomonadati</taxon>
        <taxon>Verrucomicrobiota</taxon>
        <taxon>Verrucomicrobiia</taxon>
        <taxon>Verrucomicrobiales</taxon>
        <taxon>Akkermansiaceae</taxon>
        <taxon>Akkermansia</taxon>
    </lineage>
</organism>
<reference key="1">
    <citation type="journal article" date="2011" name="PLoS ONE">
        <title>The genome of Akkermansia muciniphila, a dedicated intestinal mucin degrader, and its use in exploring intestinal metagenomes.</title>
        <authorList>
            <person name="van Passel M.W."/>
            <person name="Kant R."/>
            <person name="Zoetendal E.G."/>
            <person name="Plugge C.M."/>
            <person name="Derrien M."/>
            <person name="Malfatti S.A."/>
            <person name="Chain P.S."/>
            <person name="Woyke T."/>
            <person name="Palva A."/>
            <person name="de Vos W.M."/>
            <person name="Smidt H."/>
        </authorList>
    </citation>
    <scope>NUCLEOTIDE SEQUENCE [LARGE SCALE GENOMIC DNA]</scope>
    <source>
        <strain>ATCC BAA-835 / DSM 22959 / JCM 33894 / BCRC 81048 / CCUG 64013 / CIP 107961 / Muc</strain>
    </source>
</reference>
<feature type="chain" id="PRO_1000134959" description="Imidazole glycerol phosphate synthase subunit HisF">
    <location>
        <begin position="1"/>
        <end position="255"/>
    </location>
</feature>
<feature type="active site" evidence="1">
    <location>
        <position position="11"/>
    </location>
</feature>
<feature type="active site" evidence="1">
    <location>
        <position position="130"/>
    </location>
</feature>
<evidence type="ECO:0000255" key="1">
    <source>
        <dbReference type="HAMAP-Rule" id="MF_01013"/>
    </source>
</evidence>
<sequence>MLAKRIIPCLDVTDGRVVKGTNFINLRDAGDPVECARAYDAQQADELVFLDITASSDGRATMADVVRRTAACCFMPLTVGGGIRSVKDMREMLLAGADKVSLNTAAINRPELINEGAVAFGSQCIVVAIDAKRQASGKWGVSTHGGRKFVGLDAVEWAVEAERRGAGEILLTSMDADGAKTGYDIELTRAVSSAVRIPVIASGGAGNLDHMVDVLVEGKADAVLAASIFHFGEYTVPEAKAYFASRGIPVRPLAE</sequence>
<gene>
    <name evidence="1" type="primary">hisF</name>
    <name type="ordered locus">Amuc_0804</name>
</gene>
<dbReference type="EC" id="4.3.2.10" evidence="1"/>
<dbReference type="EMBL" id="CP001071">
    <property type="protein sequence ID" value="ACD04637.1"/>
    <property type="molecule type" value="Genomic_DNA"/>
</dbReference>
<dbReference type="RefSeq" id="WP_012419852.1">
    <property type="nucleotide sequence ID" value="NZ_CP071807.1"/>
</dbReference>
<dbReference type="SMR" id="B2UQA2"/>
<dbReference type="STRING" id="349741.Amuc_0804"/>
<dbReference type="PaxDb" id="349741-Amuc_0804"/>
<dbReference type="KEGG" id="amu:Amuc_0804"/>
<dbReference type="eggNOG" id="COG0107">
    <property type="taxonomic scope" value="Bacteria"/>
</dbReference>
<dbReference type="HOGENOM" id="CLU_048577_4_0_0"/>
<dbReference type="OrthoDB" id="9781903at2"/>
<dbReference type="BioCyc" id="AMUC349741:G1GBX-868-MONOMER"/>
<dbReference type="UniPathway" id="UPA00031">
    <property type="reaction ID" value="UER00010"/>
</dbReference>
<dbReference type="Proteomes" id="UP000001031">
    <property type="component" value="Chromosome"/>
</dbReference>
<dbReference type="GO" id="GO:0005737">
    <property type="term" value="C:cytoplasm"/>
    <property type="evidence" value="ECO:0007669"/>
    <property type="project" value="UniProtKB-SubCell"/>
</dbReference>
<dbReference type="GO" id="GO:0000107">
    <property type="term" value="F:imidazoleglycerol-phosphate synthase activity"/>
    <property type="evidence" value="ECO:0007669"/>
    <property type="project" value="UniProtKB-UniRule"/>
</dbReference>
<dbReference type="GO" id="GO:0016829">
    <property type="term" value="F:lyase activity"/>
    <property type="evidence" value="ECO:0007669"/>
    <property type="project" value="UniProtKB-KW"/>
</dbReference>
<dbReference type="GO" id="GO:0000105">
    <property type="term" value="P:L-histidine biosynthetic process"/>
    <property type="evidence" value="ECO:0007669"/>
    <property type="project" value="UniProtKB-UniRule"/>
</dbReference>
<dbReference type="CDD" id="cd04731">
    <property type="entry name" value="HisF"/>
    <property type="match status" value="1"/>
</dbReference>
<dbReference type="FunFam" id="3.20.20.70:FF:000006">
    <property type="entry name" value="Imidazole glycerol phosphate synthase subunit HisF"/>
    <property type="match status" value="1"/>
</dbReference>
<dbReference type="Gene3D" id="3.20.20.70">
    <property type="entry name" value="Aldolase class I"/>
    <property type="match status" value="1"/>
</dbReference>
<dbReference type="HAMAP" id="MF_01013">
    <property type="entry name" value="HisF"/>
    <property type="match status" value="1"/>
</dbReference>
<dbReference type="InterPro" id="IPR013785">
    <property type="entry name" value="Aldolase_TIM"/>
</dbReference>
<dbReference type="InterPro" id="IPR006062">
    <property type="entry name" value="His_biosynth"/>
</dbReference>
<dbReference type="InterPro" id="IPR004651">
    <property type="entry name" value="HisF"/>
</dbReference>
<dbReference type="InterPro" id="IPR050064">
    <property type="entry name" value="IGPS_HisA/HisF"/>
</dbReference>
<dbReference type="InterPro" id="IPR011060">
    <property type="entry name" value="RibuloseP-bd_barrel"/>
</dbReference>
<dbReference type="NCBIfam" id="TIGR00735">
    <property type="entry name" value="hisF"/>
    <property type="match status" value="1"/>
</dbReference>
<dbReference type="PANTHER" id="PTHR21235:SF2">
    <property type="entry name" value="IMIDAZOLE GLYCEROL PHOSPHATE SYNTHASE HISHF"/>
    <property type="match status" value="1"/>
</dbReference>
<dbReference type="PANTHER" id="PTHR21235">
    <property type="entry name" value="IMIDAZOLE GLYCEROL PHOSPHATE SYNTHASE SUBUNIT HISF/H IGP SYNTHASE SUBUNIT HISF/H"/>
    <property type="match status" value="1"/>
</dbReference>
<dbReference type="Pfam" id="PF00977">
    <property type="entry name" value="His_biosynth"/>
    <property type="match status" value="1"/>
</dbReference>
<dbReference type="SUPFAM" id="SSF51366">
    <property type="entry name" value="Ribulose-phoshate binding barrel"/>
    <property type="match status" value="1"/>
</dbReference>